<organism>
    <name type="scientific">Xenopus tropicalis</name>
    <name type="common">Western clawed frog</name>
    <name type="synonym">Silurana tropicalis</name>
    <dbReference type="NCBI Taxonomy" id="8364"/>
    <lineage>
        <taxon>Eukaryota</taxon>
        <taxon>Metazoa</taxon>
        <taxon>Chordata</taxon>
        <taxon>Craniata</taxon>
        <taxon>Vertebrata</taxon>
        <taxon>Euteleostomi</taxon>
        <taxon>Amphibia</taxon>
        <taxon>Batrachia</taxon>
        <taxon>Anura</taxon>
        <taxon>Pipoidea</taxon>
        <taxon>Pipidae</taxon>
        <taxon>Xenopodinae</taxon>
        <taxon>Xenopus</taxon>
        <taxon>Silurana</taxon>
    </lineage>
</organism>
<gene>
    <name type="primary">abcb6</name>
</gene>
<sequence>MVRLGSYCEHNGSISQAWLDSGLSPCFYFTLVPSVLLSFSFLLGALQSALYARHSTTMEPKYIPRSRLYRLQIVLSVVLILQSVIGLIWQAAGTDVVYGYMIVHGCLSVVAWGFSLWLLHLERTRALVREKSRGHGVVLLLFWALAFAAENLAFISWQSPNWWWLSRDTVPQKVQFGLWITRYVCTLFLFVLGIRAPGRPRKPYIVLINEDERDVETSQPLLRDPNQSTWQGFKKKLLLVMQYIWPRRNIPLQLLVALCMGLMGLERAINVFVPIYAKKIVDGLTEDSTWNILAVTVCIYVLLKFLQGGGAGTTGFLSNLRTFMWIRVQQFTNREVQIRLFAHLHSLSLRWHLGRKTGEVLRSVDRGTSSINSLLSYIVFSILPTIADIVIGIVYFTSSFNAWFGLIIFVCMTLYLTLTIIITEWRTKYRREMNTRDNEAKSRAVDSLLNFETVKYYNAEGYEVGRFNDSIMKYQVSEWKVNASLAMLNQTQNLIIGLGLLAGSLLCAYFVTENKFKVGDYVLFGTYIIQLYTPLNWFGTYYRMIQSSFIDMENMFELFNEDQEVKDAVNAPALMFRSGKIEFENVHFSYLDGKEILRDISFTVMPGQSIALVGPSGSGKSTIIRLLFRFYDVKGGTIKVDGQDISTVRQESLRSHIGVVPQDTVLFNDTIRNNIRYGRVSATDDEVEEAAAAADIHERILSFRDGYDTQTGERGLKLSGGEKQRVAIARTILKAPQIILLDEATSALDTETERNIQASLAKVCANRTTIVVAHRLSTVINSDQILVLKEGQIVERGRHEELLLKGGVYAGMWQKQQSGSESSSDSDSERKDRTSEKLQPPKATPRRGH</sequence>
<accession>Q08D64</accession>
<evidence type="ECO:0000250" key="1"/>
<evidence type="ECO:0000250" key="2">
    <source>
        <dbReference type="UniProtKB" id="O70595"/>
    </source>
</evidence>
<evidence type="ECO:0000250" key="3">
    <source>
        <dbReference type="UniProtKB" id="Q9DC29"/>
    </source>
</evidence>
<evidence type="ECO:0000250" key="4">
    <source>
        <dbReference type="UniProtKB" id="Q9NP58"/>
    </source>
</evidence>
<evidence type="ECO:0000255" key="5"/>
<evidence type="ECO:0000255" key="6">
    <source>
        <dbReference type="PROSITE-ProRule" id="PRU00434"/>
    </source>
</evidence>
<evidence type="ECO:0000255" key="7">
    <source>
        <dbReference type="PROSITE-ProRule" id="PRU00441"/>
    </source>
</evidence>
<evidence type="ECO:0000255" key="8">
    <source>
        <dbReference type="PROSITE-ProRule" id="PRU00498"/>
    </source>
</evidence>
<evidence type="ECO:0000256" key="9">
    <source>
        <dbReference type="SAM" id="MobiDB-lite"/>
    </source>
</evidence>
<evidence type="ECO:0000305" key="10"/>
<protein>
    <recommendedName>
        <fullName evidence="10">ATP-binding cassette sub-family B member 6</fullName>
    </recommendedName>
    <alternativeName>
        <fullName evidence="4">ABC-type heme transporter ABCB6</fullName>
        <ecNumber evidence="4">7.6.2.5</ecNumber>
    </alternativeName>
</protein>
<keyword id="KW-0067">ATP-binding</keyword>
<keyword id="KW-1003">Cell membrane</keyword>
<keyword id="KW-1015">Disulfide bond</keyword>
<keyword id="KW-0256">Endoplasmic reticulum</keyword>
<keyword id="KW-0967">Endosome</keyword>
<keyword id="KW-0325">Glycoprotein</keyword>
<keyword id="KW-0333">Golgi apparatus</keyword>
<keyword id="KW-0458">Lysosome</keyword>
<keyword id="KW-0472">Membrane</keyword>
<keyword id="KW-0496">Mitochondrion</keyword>
<keyword id="KW-1000">Mitochondrion outer membrane</keyword>
<keyword id="KW-0547">Nucleotide-binding</keyword>
<keyword id="KW-1185">Reference proteome</keyword>
<keyword id="KW-0964">Secreted</keyword>
<keyword id="KW-1278">Translocase</keyword>
<keyword id="KW-0812">Transmembrane</keyword>
<keyword id="KW-1133">Transmembrane helix</keyword>
<keyword id="KW-0813">Transport</keyword>
<feature type="chain" id="PRO_0000268680" description="ATP-binding cassette sub-family B member 6">
    <location>
        <begin position="1"/>
        <end position="849"/>
    </location>
</feature>
<feature type="topological domain" description="Lumenal" evidence="4">
    <location>
        <begin position="1"/>
        <end position="25"/>
    </location>
</feature>
<feature type="transmembrane region" description="Helical" evidence="5">
    <location>
        <begin position="26"/>
        <end position="46"/>
    </location>
</feature>
<feature type="topological domain" description="Cytoplasmic" evidence="10">
    <location>
        <begin position="47"/>
        <end position="72"/>
    </location>
</feature>
<feature type="transmembrane region" description="Helical" evidence="5">
    <location>
        <begin position="73"/>
        <end position="93"/>
    </location>
</feature>
<feature type="topological domain" description="Lumenal" evidence="4">
    <location>
        <begin position="94"/>
        <end position="98"/>
    </location>
</feature>
<feature type="transmembrane region" description="Helical" evidence="5">
    <location>
        <begin position="99"/>
        <end position="119"/>
    </location>
</feature>
<feature type="topological domain" description="Cytoplasmic" evidence="10">
    <location>
        <begin position="120"/>
        <end position="136"/>
    </location>
</feature>
<feature type="transmembrane region" description="Helical" evidence="5">
    <location>
        <begin position="137"/>
        <end position="157"/>
    </location>
</feature>
<feature type="topological domain" description="Lumenal" evidence="4">
    <location>
        <begin position="158"/>
        <end position="173"/>
    </location>
</feature>
<feature type="transmembrane region" description="Helical" evidence="5">
    <location>
        <begin position="174"/>
        <end position="194"/>
    </location>
</feature>
<feature type="topological domain" description="Cytoplasmic" evidence="10">
    <location>
        <begin position="195"/>
        <end position="254"/>
    </location>
</feature>
<feature type="transmembrane region" description="Helical" evidence="5 7">
    <location>
        <begin position="255"/>
        <end position="275"/>
    </location>
</feature>
<feature type="topological domain" description="Lumenal" evidence="4">
    <location>
        <begin position="276"/>
        <end position="291"/>
    </location>
</feature>
<feature type="transmembrane region" description="Helical" evidence="5 7">
    <location>
        <begin position="292"/>
        <end position="312"/>
    </location>
</feature>
<feature type="topological domain" description="Cytoplasmic" evidence="10">
    <location>
        <begin position="313"/>
        <end position="373"/>
    </location>
</feature>
<feature type="transmembrane region" description="Helical" evidence="5 7">
    <location>
        <begin position="374"/>
        <end position="394"/>
    </location>
</feature>
<feature type="topological domain" description="Lumenal" evidence="4">
    <location>
        <begin position="395"/>
        <end position="401"/>
    </location>
</feature>
<feature type="transmembrane region" description="Helical" evidence="5 7">
    <location>
        <begin position="402"/>
        <end position="422"/>
    </location>
</feature>
<feature type="topological domain" description="Cytoplasmic" evidence="10">
    <location>
        <begin position="423"/>
        <end position="492"/>
    </location>
</feature>
<feature type="transmembrane region" description="Helical" evidence="5 7">
    <location>
        <begin position="493"/>
        <end position="513"/>
    </location>
</feature>
<feature type="topological domain" description="Lumenal" evidence="4">
    <location>
        <begin position="514"/>
        <end position="520"/>
    </location>
</feature>
<feature type="transmembrane region" description="Helical" evidence="5 7">
    <location>
        <begin position="521"/>
        <end position="541"/>
    </location>
</feature>
<feature type="topological domain" description="Cytoplasmic" evidence="10">
    <location>
        <begin position="542"/>
        <end position="849"/>
    </location>
</feature>
<feature type="domain" description="ABC transmembrane type-1" evidence="7">
    <location>
        <begin position="256"/>
        <end position="547"/>
    </location>
</feature>
<feature type="domain" description="ABC transporter" evidence="6">
    <location>
        <begin position="581"/>
        <end position="815"/>
    </location>
</feature>
<feature type="region of interest" description="Required for ATPase activity" evidence="4">
    <location>
        <begin position="1"/>
        <end position="227"/>
    </location>
</feature>
<feature type="region of interest" description="Required for the lysosomal targeting" evidence="4">
    <location>
        <begin position="1"/>
        <end position="195"/>
    </location>
</feature>
<feature type="region of interest" description="Disordered" evidence="9">
    <location>
        <begin position="814"/>
        <end position="849"/>
    </location>
</feature>
<feature type="compositionally biased region" description="Low complexity" evidence="9">
    <location>
        <begin position="814"/>
        <end position="825"/>
    </location>
</feature>
<feature type="compositionally biased region" description="Basic and acidic residues" evidence="9">
    <location>
        <begin position="827"/>
        <end position="836"/>
    </location>
</feature>
<feature type="binding site" evidence="1">
    <location>
        <position position="590"/>
    </location>
    <ligand>
        <name>ATP</name>
        <dbReference type="ChEBI" id="CHEBI:30616"/>
    </ligand>
</feature>
<feature type="binding site" evidence="6">
    <location>
        <begin position="614"/>
        <end position="625"/>
    </location>
    <ligand>
        <name>ATP</name>
        <dbReference type="ChEBI" id="CHEBI:30616"/>
    </ligand>
</feature>
<feature type="glycosylation site" description="N-linked (GlcNAc...) asparagine" evidence="8">
    <location>
        <position position="11"/>
    </location>
</feature>
<feature type="disulfide bond" evidence="4">
    <location>
        <begin position="8"/>
        <end position="26"/>
    </location>
</feature>
<dbReference type="EC" id="7.6.2.5" evidence="4"/>
<dbReference type="EMBL" id="BC123925">
    <property type="protein sequence ID" value="AAI23926.1"/>
    <property type="molecule type" value="mRNA"/>
</dbReference>
<dbReference type="RefSeq" id="NP_001072643.1">
    <property type="nucleotide sequence ID" value="NM_001079175.1"/>
</dbReference>
<dbReference type="SMR" id="Q08D64"/>
<dbReference type="FunCoup" id="Q08D64">
    <property type="interactions" value="1417"/>
</dbReference>
<dbReference type="STRING" id="8364.ENSXETP00000051979"/>
<dbReference type="GlyCosmos" id="Q08D64">
    <property type="glycosylation" value="1 site, No reported glycans"/>
</dbReference>
<dbReference type="PaxDb" id="8364-ENSXETP00000030397"/>
<dbReference type="DNASU" id="780100"/>
<dbReference type="GeneID" id="780100"/>
<dbReference type="KEGG" id="xtr:780100"/>
<dbReference type="AGR" id="Xenbase:XB-GENE-1001119"/>
<dbReference type="CTD" id="10058"/>
<dbReference type="Xenbase" id="XB-GENE-1001119">
    <property type="gene designation" value="abcb6"/>
</dbReference>
<dbReference type="eggNOG" id="KOG0056">
    <property type="taxonomic scope" value="Eukaryota"/>
</dbReference>
<dbReference type="HOGENOM" id="CLU_000604_32_2_1"/>
<dbReference type="InParanoid" id="Q08D64"/>
<dbReference type="OMA" id="YYGAEHY"/>
<dbReference type="OrthoDB" id="6500128at2759"/>
<dbReference type="Reactome" id="R-XTR-1369007">
    <property type="pathway name" value="Mitochondrial ABC transporters"/>
</dbReference>
<dbReference type="Proteomes" id="UP000008143">
    <property type="component" value="Chromosome 9"/>
</dbReference>
<dbReference type="Bgee" id="ENSXETG00000013892">
    <property type="expression patterns" value="Expressed in skeletal muscle tissue and 13 other cell types or tissues"/>
</dbReference>
<dbReference type="ExpressionAtlas" id="Q08D64">
    <property type="expression patterns" value="baseline"/>
</dbReference>
<dbReference type="GO" id="GO:0031901">
    <property type="term" value="C:early endosome membrane"/>
    <property type="evidence" value="ECO:0000250"/>
    <property type="project" value="UniProtKB"/>
</dbReference>
<dbReference type="GO" id="GO:0036020">
    <property type="term" value="C:endolysosome membrane"/>
    <property type="evidence" value="ECO:0000250"/>
    <property type="project" value="UniProtKB"/>
</dbReference>
<dbReference type="GO" id="GO:0005789">
    <property type="term" value="C:endoplasmic reticulum membrane"/>
    <property type="evidence" value="ECO:0000250"/>
    <property type="project" value="UniProtKB"/>
</dbReference>
<dbReference type="GO" id="GO:0070062">
    <property type="term" value="C:extracellular exosome"/>
    <property type="evidence" value="ECO:0000250"/>
    <property type="project" value="UniProtKB"/>
</dbReference>
<dbReference type="GO" id="GO:0005794">
    <property type="term" value="C:Golgi apparatus"/>
    <property type="evidence" value="ECO:0000250"/>
    <property type="project" value="UniProtKB"/>
</dbReference>
<dbReference type="GO" id="GO:0000139">
    <property type="term" value="C:Golgi membrane"/>
    <property type="evidence" value="ECO:0007669"/>
    <property type="project" value="UniProtKB-SubCell"/>
</dbReference>
<dbReference type="GO" id="GO:0031902">
    <property type="term" value="C:late endosome membrane"/>
    <property type="evidence" value="ECO:0000250"/>
    <property type="project" value="UniProtKB"/>
</dbReference>
<dbReference type="GO" id="GO:0005765">
    <property type="term" value="C:lysosomal membrane"/>
    <property type="evidence" value="ECO:0000250"/>
    <property type="project" value="UniProtKB"/>
</dbReference>
<dbReference type="GO" id="GO:0033162">
    <property type="term" value="C:melanosome membrane"/>
    <property type="evidence" value="ECO:0000250"/>
    <property type="project" value="UniProtKB"/>
</dbReference>
<dbReference type="GO" id="GO:0005741">
    <property type="term" value="C:mitochondrial outer membrane"/>
    <property type="evidence" value="ECO:0007669"/>
    <property type="project" value="UniProtKB-SubCell"/>
</dbReference>
<dbReference type="GO" id="GO:0005739">
    <property type="term" value="C:mitochondrion"/>
    <property type="evidence" value="ECO:0000250"/>
    <property type="project" value="UniProtKB"/>
</dbReference>
<dbReference type="GO" id="GO:0032585">
    <property type="term" value="C:multivesicular body membrane"/>
    <property type="evidence" value="ECO:0000250"/>
    <property type="project" value="UniProtKB"/>
</dbReference>
<dbReference type="GO" id="GO:0005886">
    <property type="term" value="C:plasma membrane"/>
    <property type="evidence" value="ECO:0000250"/>
    <property type="project" value="UniProtKB"/>
</dbReference>
<dbReference type="GO" id="GO:0015439">
    <property type="term" value="F:ABC-type heme transporter activity"/>
    <property type="evidence" value="ECO:0007669"/>
    <property type="project" value="UniProtKB-EC"/>
</dbReference>
<dbReference type="GO" id="GO:0140359">
    <property type="term" value="F:ABC-type transporter activity"/>
    <property type="evidence" value="ECO:0000250"/>
    <property type="project" value="UniProtKB"/>
</dbReference>
<dbReference type="GO" id="GO:0005524">
    <property type="term" value="F:ATP binding"/>
    <property type="evidence" value="ECO:0000250"/>
    <property type="project" value="UniProtKB"/>
</dbReference>
<dbReference type="GO" id="GO:0016887">
    <property type="term" value="F:ATP hydrolysis activity"/>
    <property type="evidence" value="ECO:0000250"/>
    <property type="project" value="UniProtKB"/>
</dbReference>
<dbReference type="GO" id="GO:0046906">
    <property type="term" value="F:tetrapyrrole binding"/>
    <property type="evidence" value="ECO:0000250"/>
    <property type="project" value="UniProtKB"/>
</dbReference>
<dbReference type="GO" id="GO:0098849">
    <property type="term" value="P:cellular detoxification of cadmium ion"/>
    <property type="evidence" value="ECO:0000250"/>
    <property type="project" value="UniProtKB"/>
</dbReference>
<dbReference type="GO" id="GO:0042168">
    <property type="term" value="P:heme metabolic process"/>
    <property type="evidence" value="ECO:0000250"/>
    <property type="project" value="UniProtKB"/>
</dbReference>
<dbReference type="GO" id="GO:0035351">
    <property type="term" value="P:heme transmembrane transport"/>
    <property type="evidence" value="ECO:0000250"/>
    <property type="project" value="UniProtKB"/>
</dbReference>
<dbReference type="GO" id="GO:0006878">
    <property type="term" value="P:intracellular copper ion homeostasis"/>
    <property type="evidence" value="ECO:0000250"/>
    <property type="project" value="UniProtKB"/>
</dbReference>
<dbReference type="GO" id="GO:1903232">
    <property type="term" value="P:melanosome assembly"/>
    <property type="evidence" value="ECO:0000250"/>
    <property type="project" value="UniProtKB"/>
</dbReference>
<dbReference type="GO" id="GO:0006778">
    <property type="term" value="P:porphyrin-containing compound metabolic process"/>
    <property type="evidence" value="ECO:0000250"/>
    <property type="project" value="UniProtKB"/>
</dbReference>
<dbReference type="GO" id="GO:0033013">
    <property type="term" value="P:tetrapyrrole metabolic process"/>
    <property type="evidence" value="ECO:0000250"/>
    <property type="project" value="UniProtKB"/>
</dbReference>
<dbReference type="CDD" id="cd18581">
    <property type="entry name" value="ABC_6TM_ABCB6"/>
    <property type="match status" value="1"/>
</dbReference>
<dbReference type="CDD" id="cd03253">
    <property type="entry name" value="ABCC_ATM1_transporter"/>
    <property type="match status" value="1"/>
</dbReference>
<dbReference type="FunFam" id="1.20.1560.10:FF:000022">
    <property type="entry name" value="ATP-binding cassette sub-family B member 6, mitochondrial"/>
    <property type="match status" value="1"/>
</dbReference>
<dbReference type="FunFam" id="3.40.50.300:FF:000186">
    <property type="entry name" value="ATP-binding cassette sub-family B member 7, mitochondrial"/>
    <property type="match status" value="1"/>
</dbReference>
<dbReference type="Gene3D" id="1.20.1560.10">
    <property type="entry name" value="ABC transporter type 1, transmembrane domain"/>
    <property type="match status" value="1"/>
</dbReference>
<dbReference type="Gene3D" id="3.40.50.300">
    <property type="entry name" value="P-loop containing nucleotide triphosphate hydrolases"/>
    <property type="match status" value="1"/>
</dbReference>
<dbReference type="InterPro" id="IPR003593">
    <property type="entry name" value="AAA+_ATPase"/>
</dbReference>
<dbReference type="InterPro" id="IPR011527">
    <property type="entry name" value="ABC1_TM_dom"/>
</dbReference>
<dbReference type="InterPro" id="IPR036640">
    <property type="entry name" value="ABC1_TM_sf"/>
</dbReference>
<dbReference type="InterPro" id="IPR003439">
    <property type="entry name" value="ABC_transporter-like_ATP-bd"/>
</dbReference>
<dbReference type="InterPro" id="IPR017871">
    <property type="entry name" value="ABC_transporter-like_CS"/>
</dbReference>
<dbReference type="InterPro" id="IPR032410">
    <property type="entry name" value="ABCB6_N"/>
</dbReference>
<dbReference type="InterPro" id="IPR027417">
    <property type="entry name" value="P-loop_NTPase"/>
</dbReference>
<dbReference type="InterPro" id="IPR039421">
    <property type="entry name" value="Type_1_exporter"/>
</dbReference>
<dbReference type="PANTHER" id="PTHR24221">
    <property type="entry name" value="ATP-BINDING CASSETTE SUB-FAMILY B"/>
    <property type="match status" value="1"/>
</dbReference>
<dbReference type="PANTHER" id="PTHR24221:SF654">
    <property type="entry name" value="ATP-BINDING CASSETTE SUB-FAMILY B MEMBER 6"/>
    <property type="match status" value="1"/>
</dbReference>
<dbReference type="Pfam" id="PF00664">
    <property type="entry name" value="ABC_membrane"/>
    <property type="match status" value="1"/>
</dbReference>
<dbReference type="Pfam" id="PF00005">
    <property type="entry name" value="ABC_tran"/>
    <property type="match status" value="1"/>
</dbReference>
<dbReference type="Pfam" id="PF16185">
    <property type="entry name" value="MTABC_N"/>
    <property type="match status" value="1"/>
</dbReference>
<dbReference type="SMART" id="SM00382">
    <property type="entry name" value="AAA"/>
    <property type="match status" value="1"/>
</dbReference>
<dbReference type="SUPFAM" id="SSF90123">
    <property type="entry name" value="ABC transporter transmembrane region"/>
    <property type="match status" value="1"/>
</dbReference>
<dbReference type="SUPFAM" id="SSF52540">
    <property type="entry name" value="P-loop containing nucleoside triphosphate hydrolases"/>
    <property type="match status" value="1"/>
</dbReference>
<dbReference type="PROSITE" id="PS50929">
    <property type="entry name" value="ABC_TM1F"/>
    <property type="match status" value="1"/>
</dbReference>
<dbReference type="PROSITE" id="PS00211">
    <property type="entry name" value="ABC_TRANSPORTER_1"/>
    <property type="match status" value="1"/>
</dbReference>
<dbReference type="PROSITE" id="PS50893">
    <property type="entry name" value="ABC_TRANSPORTER_2"/>
    <property type="match status" value="1"/>
</dbReference>
<comment type="function">
    <text evidence="2 4">ATP-dependent transporter that catalyzes the transport of a broad-spectrum of porphyrins from the cytoplasm to the extracellular space through the plasma membrane or into the vesicle lumen. May also function as an ATP-dependent importer of porphyrins from the cytoplasm into the mitochondria, in turn may participate in the de novo heme biosynthesis regulation and in the coordination of heme and iron homeostasis during phenylhydrazine stress. May also play a key role in the early steps of melanogenesis producing PMEL amyloid fibrils. In vitro, it confers to cells a resistance to toxic metal such as arsenic and cadmium and against chemotherapeutics agent such as 5-fluorouracil, SN-38 and vincristin (By similarity). In addition may play a role in the transition metal homeostasis (By similarity).</text>
</comment>
<comment type="catalytic activity">
    <reaction evidence="4">
        <text>heme b(in) + ATP + H2O = heme b(out) + ADP + phosphate + H(+)</text>
        <dbReference type="Rhea" id="RHEA:19261"/>
        <dbReference type="ChEBI" id="CHEBI:15377"/>
        <dbReference type="ChEBI" id="CHEBI:15378"/>
        <dbReference type="ChEBI" id="CHEBI:30616"/>
        <dbReference type="ChEBI" id="CHEBI:43474"/>
        <dbReference type="ChEBI" id="CHEBI:60344"/>
        <dbReference type="ChEBI" id="CHEBI:456216"/>
        <dbReference type="EC" id="7.6.2.5"/>
    </reaction>
    <physiologicalReaction direction="left-to-right" evidence="4">
        <dbReference type="Rhea" id="RHEA:19262"/>
    </physiologicalReaction>
</comment>
<comment type="catalytic activity">
    <reaction evidence="4">
        <text>coproporphyrin III(in) + ATP + H2O = coproporphyrin III(out) + ADP + phosphate + H(+)</text>
        <dbReference type="Rhea" id="RHEA:66664"/>
        <dbReference type="ChEBI" id="CHEBI:15377"/>
        <dbReference type="ChEBI" id="CHEBI:15378"/>
        <dbReference type="ChEBI" id="CHEBI:30616"/>
        <dbReference type="ChEBI" id="CHEBI:43474"/>
        <dbReference type="ChEBI" id="CHEBI:131725"/>
        <dbReference type="ChEBI" id="CHEBI:456216"/>
    </reaction>
    <physiologicalReaction direction="left-to-right" evidence="4">
        <dbReference type="Rhea" id="RHEA:66665"/>
    </physiologicalReaction>
</comment>
<comment type="catalytic activity">
    <reaction evidence="4">
        <text>pheophorbide a(in) + ATP + H2O = pheophorbide a(out) + ADP + phosphate + H(+)</text>
        <dbReference type="Rhea" id="RHEA:61360"/>
        <dbReference type="ChEBI" id="CHEBI:15377"/>
        <dbReference type="ChEBI" id="CHEBI:15378"/>
        <dbReference type="ChEBI" id="CHEBI:30616"/>
        <dbReference type="ChEBI" id="CHEBI:43474"/>
        <dbReference type="ChEBI" id="CHEBI:58687"/>
        <dbReference type="ChEBI" id="CHEBI:456216"/>
    </reaction>
    <physiologicalReaction direction="left-to-right" evidence="4">
        <dbReference type="Rhea" id="RHEA:61361"/>
    </physiologicalReaction>
</comment>
<comment type="catalytic activity">
    <reaction evidence="3">
        <text>coproporphyrinogen III(in) + ATP + H2O = coproporphyrinogen III(out) + ADP + phosphate + H(+)</text>
        <dbReference type="Rhea" id="RHEA:66680"/>
        <dbReference type="ChEBI" id="CHEBI:15377"/>
        <dbReference type="ChEBI" id="CHEBI:15378"/>
        <dbReference type="ChEBI" id="CHEBI:30616"/>
        <dbReference type="ChEBI" id="CHEBI:43474"/>
        <dbReference type="ChEBI" id="CHEBI:57309"/>
        <dbReference type="ChEBI" id="CHEBI:456216"/>
    </reaction>
    <physiologicalReaction direction="left-to-right" evidence="3">
        <dbReference type="Rhea" id="RHEA:66681"/>
    </physiologicalReaction>
</comment>
<comment type="catalytic activity">
    <reaction evidence="4">
        <text>protoporphyrin IX(in) + ATP + H2O = protoporphyrin IX(out) + ADP + phosphate + H(+)</text>
        <dbReference type="Rhea" id="RHEA:61336"/>
        <dbReference type="ChEBI" id="CHEBI:15377"/>
        <dbReference type="ChEBI" id="CHEBI:15378"/>
        <dbReference type="ChEBI" id="CHEBI:30616"/>
        <dbReference type="ChEBI" id="CHEBI:43474"/>
        <dbReference type="ChEBI" id="CHEBI:57306"/>
        <dbReference type="ChEBI" id="CHEBI:456216"/>
    </reaction>
    <physiologicalReaction direction="left-to-right" evidence="4">
        <dbReference type="Rhea" id="RHEA:61337"/>
    </physiologicalReaction>
</comment>
<comment type="catalytic activity">
    <reaction evidence="3">
        <text>coproporphyrin I(in) + ATP + H2O = coproporphyrin I(out) + ADP + phosphate + H(+)</text>
        <dbReference type="Rhea" id="RHEA:66768"/>
        <dbReference type="ChEBI" id="CHEBI:15377"/>
        <dbReference type="ChEBI" id="CHEBI:15378"/>
        <dbReference type="ChEBI" id="CHEBI:30616"/>
        <dbReference type="ChEBI" id="CHEBI:43474"/>
        <dbReference type="ChEBI" id="CHEBI:167478"/>
        <dbReference type="ChEBI" id="CHEBI:456216"/>
    </reaction>
    <physiologicalReaction direction="left-to-right" evidence="3">
        <dbReference type="Rhea" id="RHEA:66769"/>
    </physiologicalReaction>
</comment>
<comment type="catalytic activity">
    <reaction evidence="3">
        <text>uroporphyrin I(in) + ATP + H2O = uroporphyrin I(out) + ADP + phosphate + H(+)</text>
        <dbReference type="Rhea" id="RHEA:66772"/>
        <dbReference type="ChEBI" id="CHEBI:15377"/>
        <dbReference type="ChEBI" id="CHEBI:15378"/>
        <dbReference type="ChEBI" id="CHEBI:30616"/>
        <dbReference type="ChEBI" id="CHEBI:43474"/>
        <dbReference type="ChEBI" id="CHEBI:167480"/>
        <dbReference type="ChEBI" id="CHEBI:456216"/>
    </reaction>
    <physiologicalReaction direction="left-to-right" evidence="3">
        <dbReference type="Rhea" id="RHEA:66773"/>
    </physiologicalReaction>
</comment>
<comment type="catalytic activity">
    <reaction evidence="3">
        <text>uroporphyrin III(in) + ATP + H2O = uroporphyrin III(out) + ADP + phosphate + H(+)</text>
        <dbReference type="Rhea" id="RHEA:66776"/>
        <dbReference type="ChEBI" id="CHEBI:15377"/>
        <dbReference type="ChEBI" id="CHEBI:15378"/>
        <dbReference type="ChEBI" id="CHEBI:30616"/>
        <dbReference type="ChEBI" id="CHEBI:43474"/>
        <dbReference type="ChEBI" id="CHEBI:167479"/>
        <dbReference type="ChEBI" id="CHEBI:456216"/>
    </reaction>
    <physiologicalReaction direction="left-to-right" evidence="3">
        <dbReference type="Rhea" id="RHEA:66777"/>
    </physiologicalReaction>
</comment>
<comment type="subunit">
    <text evidence="4">Homodimer.</text>
</comment>
<comment type="subcellular location">
    <subcellularLocation>
        <location evidence="4">Cell membrane</location>
        <topology evidence="5">Multi-pass membrane protein</topology>
    </subcellularLocation>
    <subcellularLocation>
        <location evidence="4">Mitochondrion outer membrane</location>
        <topology evidence="5">Multi-pass membrane protein</topology>
    </subcellularLocation>
    <subcellularLocation>
        <location evidence="4">Endoplasmic reticulum membrane</location>
        <topology evidence="5">Multi-pass membrane protein</topology>
    </subcellularLocation>
    <subcellularLocation>
        <location evidence="4">Golgi apparatus membrane</location>
        <topology evidence="5">Multi-pass membrane protein</topology>
    </subcellularLocation>
    <subcellularLocation>
        <location evidence="4">Endosome membrane</location>
        <topology evidence="5">Multi-pass membrane protein</topology>
    </subcellularLocation>
    <subcellularLocation>
        <location evidence="4">Lysosome membrane</location>
    </subcellularLocation>
    <subcellularLocation>
        <location evidence="2">Late endosome membrane</location>
    </subcellularLocation>
    <subcellularLocation>
        <location evidence="2">Early endosome membrane</location>
    </subcellularLocation>
    <subcellularLocation>
        <location evidence="4">Secreted</location>
        <location evidence="4">Extracellular exosome</location>
    </subcellularLocation>
    <subcellularLocation>
        <location evidence="4">Mitochondrion</location>
    </subcellularLocation>
    <subcellularLocation>
        <location evidence="4">Endosome</location>
        <location evidence="4">Multivesicular body membrane</location>
    </subcellularLocation>
    <subcellularLocation>
        <location evidence="4">Melanosome membrane</location>
    </subcellularLocation>
    <text evidence="2 4">Present in the membrane of mature erythrocytes and in exosomes released from reticulocytes during the final steps of erythroid maturation. Traffics from endoplasmic reticulum to Golgi during its glycans's maturation, therefrom is first targeted to the plasma membrane, and is rapidly internalized through endocytosis to be distributed to the limiting membrane of multivesicular bodies and lysosomes. Localized on the limiting membrane of early melanosomes of pigment cells (By similarity). Targeted to the endolysosomal compartment (By similarity).</text>
</comment>
<comment type="domain">
    <text evidence="4">Contains two independently folding units, the N-terminal transmembrane domain (residues 1-205) and the ABC-core domain (206-842) are respectively responsible for the lysosomal targeting and the ATPase activity.</text>
</comment>
<comment type="PTM">
    <text evidence="4">N-glycosylated.</text>
</comment>
<comment type="similarity">
    <text evidence="10">Belongs to the ABC transporter superfamily. ABCB family. Heavy Metal importer (TC 3.A.1.210) subfamily.</text>
</comment>
<comment type="caution">
    <text evidence="4">To date, the intracellular localization of ABCB6 is a matter of debate, with conflicting reports suggesting mitochondrial or endolysosomal localization, therefore questioning the requirement of ABCB6 in the mitochondrial import of porphyrins.</text>
</comment>
<name>ABCB6_XENTR</name>
<reference key="1">
    <citation type="submission" date="2006-09" db="EMBL/GenBank/DDBJ databases">
        <authorList>
            <consortium name="NIH - Xenopus Gene Collection (XGC) project"/>
        </authorList>
    </citation>
    <scope>NUCLEOTIDE SEQUENCE [LARGE SCALE MRNA]</scope>
    <source>
        <tissue>Testis</tissue>
    </source>
</reference>
<proteinExistence type="evidence at transcript level"/>